<evidence type="ECO:0000255" key="1"/>
<evidence type="ECO:0000255" key="2">
    <source>
        <dbReference type="PROSITE-ProRule" id="PRU00712"/>
    </source>
</evidence>
<evidence type="ECO:0000255" key="3">
    <source>
        <dbReference type="PROSITE-ProRule" id="PRU00714"/>
    </source>
</evidence>
<evidence type="ECO:0000256" key="4">
    <source>
        <dbReference type="SAM" id="MobiDB-lite"/>
    </source>
</evidence>
<evidence type="ECO:0000305" key="5"/>
<organism>
    <name type="scientific">Dictyostelium discoideum</name>
    <name type="common">Social amoeba</name>
    <dbReference type="NCBI Taxonomy" id="44689"/>
    <lineage>
        <taxon>Eukaryota</taxon>
        <taxon>Amoebozoa</taxon>
        <taxon>Evosea</taxon>
        <taxon>Eumycetozoa</taxon>
        <taxon>Dictyostelia</taxon>
        <taxon>Dictyosteliales</taxon>
        <taxon>Dictyosteliaceae</taxon>
        <taxon>Dictyostelium</taxon>
    </lineage>
</organism>
<sequence>MKFGKYLESQVEANRYVDYKGIRKSLKRFKSEIESLNIHISELKAYNLNNATSKINSKQPSPTTATATTTTIGISSSNGGSNLLRNSISTSKFMNLSQTPLGSSTPMPSDQITAINTSKSILESMEQLKEIQDRLVKSLTDEVSKVNDFYMEREKEAQERFDKLKIQVPLYLKSKEKQRRENEKELNDHDELLSYSESYHYSKKKNKLNNNNNNNNNNNNNNNNTTSPPPLSHDQQHLQQPEIKRINQHHAVLNLTPIKSTPLSPKQQDGSSKKEVKISLLSSPILEEEEEEEEEEDDNIHDQDPEVIEMATVYHYDEDELEEVLSDNCNDNGASDEFNGSVNNNGAGSGGGGNNNSSSELNLTFDIIGSKISKSLKEISTHVVKPTTTFFQPLGDRAKRFMSMGKQKSDEALLKEAFREYYHFLVILKNYQVINYTGFVKIIKKSEKNTGLSIGSQVMSFIESQQFRQSKKIERLTSSIEKIHSELFNNGKIRDARKQLRNSEHVSQQSPTISNFFSGVCAGWTSALLMLIYYFIYTKEFDDFVRFSSIYNVYSAFGLVLLWAFIFGIDCWVWTKSHVHYSFIFELSKNKFNHVKIFQAVTLLSVMWITSIGVYMWQSVSGDDFPFPFVPPEYNPLVLFGAYMLILVCPFNIFQLSVRKWFLNTVFRVLTAPIKSVKFKDFFMGDQLSSLVLMIVQFAQFVCFYTYDVYRPEHSGGCIRYARYFNPFISGLPAYCRLMQCFRRYYDSYDSTTGKGDTVHLRNAVKYSLSIVVVVCSTLDGFFSGDSGWHSPYRLIWVVAGVSNSMYSYWWDLICDWSIVVRPKGQHWNPFKWTLRKRRMYQPTFVYYFAIFSNLGFRTTWTFTKSLPQLTNILPSYKLVVVIGIIEILRRGQWNIFRLENEHLNNCGKFRVTREIPLPYQIRDNEN</sequence>
<reference key="1">
    <citation type="journal article" date="2005" name="Nature">
        <title>The genome of the social amoeba Dictyostelium discoideum.</title>
        <authorList>
            <person name="Eichinger L."/>
            <person name="Pachebat J.A."/>
            <person name="Gloeckner G."/>
            <person name="Rajandream M.A."/>
            <person name="Sucgang R."/>
            <person name="Berriman M."/>
            <person name="Song J."/>
            <person name="Olsen R."/>
            <person name="Szafranski K."/>
            <person name="Xu Q."/>
            <person name="Tunggal B."/>
            <person name="Kummerfeld S."/>
            <person name="Madera M."/>
            <person name="Konfortov B.A."/>
            <person name="Rivero F."/>
            <person name="Bankier A.T."/>
            <person name="Lehmann R."/>
            <person name="Hamlin N."/>
            <person name="Davies R."/>
            <person name="Gaudet P."/>
            <person name="Fey P."/>
            <person name="Pilcher K."/>
            <person name="Chen G."/>
            <person name="Saunders D."/>
            <person name="Sodergren E.J."/>
            <person name="Davis P."/>
            <person name="Kerhornou A."/>
            <person name="Nie X."/>
            <person name="Hall N."/>
            <person name="Anjard C."/>
            <person name="Hemphill L."/>
            <person name="Bason N."/>
            <person name="Farbrother P."/>
            <person name="Desany B."/>
            <person name="Just E."/>
            <person name="Morio T."/>
            <person name="Rost R."/>
            <person name="Churcher C.M."/>
            <person name="Cooper J."/>
            <person name="Haydock S."/>
            <person name="van Driessche N."/>
            <person name="Cronin A."/>
            <person name="Goodhead I."/>
            <person name="Muzny D.M."/>
            <person name="Mourier T."/>
            <person name="Pain A."/>
            <person name="Lu M."/>
            <person name="Harper D."/>
            <person name="Lindsay R."/>
            <person name="Hauser H."/>
            <person name="James K.D."/>
            <person name="Quiles M."/>
            <person name="Madan Babu M."/>
            <person name="Saito T."/>
            <person name="Buchrieser C."/>
            <person name="Wardroper A."/>
            <person name="Felder M."/>
            <person name="Thangavelu M."/>
            <person name="Johnson D."/>
            <person name="Knights A."/>
            <person name="Loulseged H."/>
            <person name="Mungall K.L."/>
            <person name="Oliver K."/>
            <person name="Price C."/>
            <person name="Quail M.A."/>
            <person name="Urushihara H."/>
            <person name="Hernandez J."/>
            <person name="Rabbinowitsch E."/>
            <person name="Steffen D."/>
            <person name="Sanders M."/>
            <person name="Ma J."/>
            <person name="Kohara Y."/>
            <person name="Sharp S."/>
            <person name="Simmonds M.N."/>
            <person name="Spiegler S."/>
            <person name="Tivey A."/>
            <person name="Sugano S."/>
            <person name="White B."/>
            <person name="Walker D."/>
            <person name="Woodward J.R."/>
            <person name="Winckler T."/>
            <person name="Tanaka Y."/>
            <person name="Shaulsky G."/>
            <person name="Schleicher M."/>
            <person name="Weinstock G.M."/>
            <person name="Rosenthal A."/>
            <person name="Cox E.C."/>
            <person name="Chisholm R.L."/>
            <person name="Gibbs R.A."/>
            <person name="Loomis W.F."/>
            <person name="Platzer M."/>
            <person name="Kay R.R."/>
            <person name="Williams J.G."/>
            <person name="Dear P.H."/>
            <person name="Noegel A.A."/>
            <person name="Barrell B.G."/>
            <person name="Kuspa A."/>
        </authorList>
    </citation>
    <scope>NUCLEOTIDE SEQUENCE [LARGE SCALE GENOMIC DNA]</scope>
    <source>
        <strain>AX4</strain>
    </source>
</reference>
<protein>
    <recommendedName>
        <fullName>SPX and EXS domain-containing protein 5</fullName>
    </recommendedName>
</protein>
<comment type="subcellular location">
    <subcellularLocation>
        <location evidence="5">Membrane</location>
        <topology evidence="5">Multi-pass membrane protein</topology>
    </subcellularLocation>
</comment>
<comment type="similarity">
    <text evidence="5">Belongs to the SYG1 (TC 2.A.94) family.</text>
</comment>
<dbReference type="EMBL" id="AAFI02000164">
    <property type="protein sequence ID" value="EAL62184.2"/>
    <property type="molecule type" value="Genomic_DNA"/>
</dbReference>
<dbReference type="RefSeq" id="XP_635615.2">
    <property type="nucleotide sequence ID" value="XM_630523.2"/>
</dbReference>
<dbReference type="SMR" id="Q54G02"/>
<dbReference type="FunCoup" id="Q54G02">
    <property type="interactions" value="6"/>
</dbReference>
<dbReference type="STRING" id="44689.Q54G02"/>
<dbReference type="GlyGen" id="Q54G02">
    <property type="glycosylation" value="1 site"/>
</dbReference>
<dbReference type="PaxDb" id="44689-DDB0266490"/>
<dbReference type="EnsemblProtists" id="EAL62184">
    <property type="protein sequence ID" value="EAL62184"/>
    <property type="gene ID" value="DDB_G0290647"/>
</dbReference>
<dbReference type="GeneID" id="8627687"/>
<dbReference type="KEGG" id="ddi:DDB_G0290647"/>
<dbReference type="dictyBase" id="DDB_G0290647"/>
<dbReference type="VEuPathDB" id="AmoebaDB:DDB_G0290647"/>
<dbReference type="eggNOG" id="KOG1162">
    <property type="taxonomic scope" value="Eukaryota"/>
</dbReference>
<dbReference type="HOGENOM" id="CLU_315337_0_0_1"/>
<dbReference type="InParanoid" id="Q54G02"/>
<dbReference type="OMA" id="NIFMWRR"/>
<dbReference type="PhylomeDB" id="Q54G02"/>
<dbReference type="PRO" id="PR:Q54G02"/>
<dbReference type="Proteomes" id="UP000002195">
    <property type="component" value="Chromosome 5"/>
</dbReference>
<dbReference type="GO" id="GO:0005886">
    <property type="term" value="C:plasma membrane"/>
    <property type="evidence" value="ECO:0000318"/>
    <property type="project" value="GO_Central"/>
</dbReference>
<dbReference type="GO" id="GO:0000822">
    <property type="term" value="F:inositol hexakisphosphate binding"/>
    <property type="evidence" value="ECO:0000318"/>
    <property type="project" value="GO_Central"/>
</dbReference>
<dbReference type="GO" id="GO:0005315">
    <property type="term" value="F:phosphate transmembrane transporter activity"/>
    <property type="evidence" value="ECO:0000318"/>
    <property type="project" value="GO_Central"/>
</dbReference>
<dbReference type="GO" id="GO:0016036">
    <property type="term" value="P:cellular response to phosphate starvation"/>
    <property type="evidence" value="ECO:0000318"/>
    <property type="project" value="GO_Central"/>
</dbReference>
<dbReference type="GO" id="GO:0006817">
    <property type="term" value="P:phosphate ion transport"/>
    <property type="evidence" value="ECO:0000318"/>
    <property type="project" value="GO_Central"/>
</dbReference>
<dbReference type="InterPro" id="IPR004342">
    <property type="entry name" value="EXS_C"/>
</dbReference>
<dbReference type="InterPro" id="IPR004331">
    <property type="entry name" value="SPX_dom"/>
</dbReference>
<dbReference type="PANTHER" id="PTHR10783:SF103">
    <property type="entry name" value="SOLUTE CARRIER FAMILY 53 MEMBER 1"/>
    <property type="match status" value="1"/>
</dbReference>
<dbReference type="PANTHER" id="PTHR10783">
    <property type="entry name" value="XENOTROPIC AND POLYTROPIC RETROVIRUS RECEPTOR 1-RELATED"/>
    <property type="match status" value="1"/>
</dbReference>
<dbReference type="Pfam" id="PF03124">
    <property type="entry name" value="EXS"/>
    <property type="match status" value="1"/>
</dbReference>
<dbReference type="Pfam" id="PF03105">
    <property type="entry name" value="SPX"/>
    <property type="match status" value="1"/>
</dbReference>
<dbReference type="PROSITE" id="PS51380">
    <property type="entry name" value="EXS"/>
    <property type="match status" value="1"/>
</dbReference>
<dbReference type="PROSITE" id="PS51382">
    <property type="entry name" value="SPX"/>
    <property type="match status" value="1"/>
</dbReference>
<proteinExistence type="inferred from homology"/>
<accession>Q54G02</accession>
<name>SPXS5_DICDI</name>
<gene>
    <name type="ORF">DDB_G0290647</name>
</gene>
<feature type="chain" id="PRO_0000330824" description="SPX and EXS domain-containing protein 5">
    <location>
        <begin position="1"/>
        <end position="927"/>
    </location>
</feature>
<feature type="transmembrane region" description="Helical" evidence="1">
    <location>
        <begin position="516"/>
        <end position="536"/>
    </location>
</feature>
<feature type="transmembrane region" description="Helical" evidence="1">
    <location>
        <begin position="553"/>
        <end position="573"/>
    </location>
</feature>
<feature type="transmembrane region" description="Helical" evidence="1">
    <location>
        <begin position="597"/>
        <end position="617"/>
    </location>
</feature>
<feature type="transmembrane region" description="Helical" evidence="1">
    <location>
        <begin position="636"/>
        <end position="656"/>
    </location>
</feature>
<feature type="transmembrane region" description="Helical" evidence="1">
    <location>
        <begin position="682"/>
        <end position="702"/>
    </location>
</feature>
<feature type="transmembrane region" description="Helical" evidence="1">
    <location>
        <begin position="769"/>
        <end position="789"/>
    </location>
</feature>
<feature type="transmembrane region" description="Helical" evidence="1">
    <location>
        <begin position="845"/>
        <end position="862"/>
    </location>
</feature>
<feature type="transmembrane region" description="Helical" evidence="1">
    <location>
        <begin position="869"/>
        <end position="889"/>
    </location>
</feature>
<feature type="domain" description="SPX" evidence="3">
    <location>
        <begin position="1"/>
        <end position="460"/>
    </location>
</feature>
<feature type="domain" description="EXS" evidence="2">
    <location>
        <begin position="717"/>
        <end position="927"/>
    </location>
</feature>
<feature type="region of interest" description="Disordered" evidence="4">
    <location>
        <begin position="54"/>
        <end position="78"/>
    </location>
</feature>
<feature type="region of interest" description="Disordered" evidence="4">
    <location>
        <begin position="204"/>
        <end position="239"/>
    </location>
</feature>
<feature type="region of interest" description="Disordered" evidence="4">
    <location>
        <begin position="257"/>
        <end position="305"/>
    </location>
</feature>
<feature type="region of interest" description="Disordered" evidence="4">
    <location>
        <begin position="326"/>
        <end position="355"/>
    </location>
</feature>
<feature type="compositionally biased region" description="Low complexity" evidence="4">
    <location>
        <begin position="60"/>
        <end position="78"/>
    </location>
</feature>
<feature type="compositionally biased region" description="Low complexity" evidence="4">
    <location>
        <begin position="208"/>
        <end position="224"/>
    </location>
</feature>
<feature type="compositionally biased region" description="Polar residues" evidence="4">
    <location>
        <begin position="257"/>
        <end position="270"/>
    </location>
</feature>
<feature type="compositionally biased region" description="Acidic residues" evidence="4">
    <location>
        <begin position="286"/>
        <end position="299"/>
    </location>
</feature>
<keyword id="KW-0472">Membrane</keyword>
<keyword id="KW-1185">Reference proteome</keyword>
<keyword id="KW-0812">Transmembrane</keyword>
<keyword id="KW-1133">Transmembrane helix</keyword>